<dbReference type="EC" id="1.1.1.-"/>
<dbReference type="EMBL" id="AP006716">
    <property type="protein sequence ID" value="BAE04061.1"/>
    <property type="molecule type" value="Genomic_DNA"/>
</dbReference>
<dbReference type="RefSeq" id="WP_011275076.1">
    <property type="nucleotide sequence ID" value="NC_007168.1"/>
</dbReference>
<dbReference type="SMR" id="Q4L8G4"/>
<dbReference type="KEGG" id="sha:SH0752"/>
<dbReference type="eggNOG" id="COG1052">
    <property type="taxonomic scope" value="Bacteria"/>
</dbReference>
<dbReference type="HOGENOM" id="CLU_019796_1_2_9"/>
<dbReference type="OrthoDB" id="9805416at2"/>
<dbReference type="Proteomes" id="UP000000543">
    <property type="component" value="Chromosome"/>
</dbReference>
<dbReference type="GO" id="GO:0051287">
    <property type="term" value="F:NAD binding"/>
    <property type="evidence" value="ECO:0007669"/>
    <property type="project" value="InterPro"/>
</dbReference>
<dbReference type="GO" id="GO:0016616">
    <property type="term" value="F:oxidoreductase activity, acting on the CH-OH group of donors, NAD or NADP as acceptor"/>
    <property type="evidence" value="ECO:0007669"/>
    <property type="project" value="InterPro"/>
</dbReference>
<dbReference type="CDD" id="cd12178">
    <property type="entry name" value="2-Hacid_dh_13"/>
    <property type="match status" value="1"/>
</dbReference>
<dbReference type="FunFam" id="3.40.50.720:FF:000462">
    <property type="entry name" value="Glyoxylate reductase (NADP+)"/>
    <property type="match status" value="1"/>
</dbReference>
<dbReference type="Gene3D" id="3.40.50.720">
    <property type="entry name" value="NAD(P)-binding Rossmann-like Domain"/>
    <property type="match status" value="2"/>
</dbReference>
<dbReference type="InterPro" id="IPR050857">
    <property type="entry name" value="D-2-hydroxyacid_DH"/>
</dbReference>
<dbReference type="InterPro" id="IPR006139">
    <property type="entry name" value="D-isomer_2_OHA_DH_cat_dom"/>
</dbReference>
<dbReference type="InterPro" id="IPR029753">
    <property type="entry name" value="D-isomer_DH_CS"/>
</dbReference>
<dbReference type="InterPro" id="IPR006140">
    <property type="entry name" value="D-isomer_DH_NAD-bd"/>
</dbReference>
<dbReference type="InterPro" id="IPR036291">
    <property type="entry name" value="NAD(P)-bd_dom_sf"/>
</dbReference>
<dbReference type="PANTHER" id="PTHR42789">
    <property type="entry name" value="D-ISOMER SPECIFIC 2-HYDROXYACID DEHYDROGENASE FAMILY PROTEIN (AFU_ORTHOLOGUE AFUA_6G10090)"/>
    <property type="match status" value="1"/>
</dbReference>
<dbReference type="PANTHER" id="PTHR42789:SF1">
    <property type="entry name" value="D-ISOMER SPECIFIC 2-HYDROXYACID DEHYDROGENASE FAMILY PROTEIN (AFU_ORTHOLOGUE AFUA_6G10090)"/>
    <property type="match status" value="1"/>
</dbReference>
<dbReference type="Pfam" id="PF00389">
    <property type="entry name" value="2-Hacid_dh"/>
    <property type="match status" value="1"/>
</dbReference>
<dbReference type="Pfam" id="PF02826">
    <property type="entry name" value="2-Hacid_dh_C"/>
    <property type="match status" value="1"/>
</dbReference>
<dbReference type="SUPFAM" id="SSF52283">
    <property type="entry name" value="Formate/glycerate dehydrogenase catalytic domain-like"/>
    <property type="match status" value="1"/>
</dbReference>
<dbReference type="SUPFAM" id="SSF51735">
    <property type="entry name" value="NAD(P)-binding Rossmann-fold domains"/>
    <property type="match status" value="1"/>
</dbReference>
<dbReference type="PROSITE" id="PS00671">
    <property type="entry name" value="D_2_HYDROXYACID_DH_3"/>
    <property type="match status" value="1"/>
</dbReference>
<feature type="chain" id="PRO_0000312191" description="Putative 2-hydroxyacid dehydrogenase SH0752">
    <location>
        <begin position="1"/>
        <end position="318"/>
    </location>
</feature>
<feature type="active site" evidence="1">
    <location>
        <position position="236"/>
    </location>
</feature>
<feature type="active site" evidence="1">
    <location>
        <position position="265"/>
    </location>
</feature>
<feature type="active site" description="Proton donor" evidence="1">
    <location>
        <position position="283"/>
    </location>
</feature>
<feature type="binding site" evidence="1">
    <location>
        <begin position="155"/>
        <end position="156"/>
    </location>
    <ligand>
        <name>NAD(+)</name>
        <dbReference type="ChEBI" id="CHEBI:57540"/>
    </ligand>
</feature>
<feature type="binding site" evidence="1">
    <location>
        <begin position="234"/>
        <end position="236"/>
    </location>
    <ligand>
        <name>NAD(+)</name>
        <dbReference type="ChEBI" id="CHEBI:57540"/>
    </ligand>
</feature>
<feature type="binding site" evidence="1">
    <location>
        <position position="260"/>
    </location>
    <ligand>
        <name>NAD(+)</name>
        <dbReference type="ChEBI" id="CHEBI:57540"/>
    </ligand>
</feature>
<feature type="binding site" evidence="1">
    <location>
        <begin position="283"/>
        <end position="286"/>
    </location>
    <ligand>
        <name>NAD(+)</name>
        <dbReference type="ChEBI" id="CHEBI:57540"/>
    </ligand>
</feature>
<reference key="1">
    <citation type="journal article" date="2005" name="J. Bacteriol.">
        <title>Whole-genome sequencing of Staphylococcus haemolyticus uncovers the extreme plasticity of its genome and the evolution of human-colonizing staphylococcal species.</title>
        <authorList>
            <person name="Takeuchi F."/>
            <person name="Watanabe S."/>
            <person name="Baba T."/>
            <person name="Yuzawa H."/>
            <person name="Ito T."/>
            <person name="Morimoto Y."/>
            <person name="Kuroda M."/>
            <person name="Cui L."/>
            <person name="Takahashi M."/>
            <person name="Ankai A."/>
            <person name="Baba S."/>
            <person name="Fukui S."/>
            <person name="Lee J.C."/>
            <person name="Hiramatsu K."/>
        </authorList>
    </citation>
    <scope>NUCLEOTIDE SEQUENCE [LARGE SCALE GENOMIC DNA]</scope>
    <source>
        <strain>JCSC1435</strain>
    </source>
</reference>
<sequence>MEKVYIAGAIPEVGLNLLKEHFEVEMYEGEGIIDKATLMEGVKDASALISILSTNVDQEVIDSASNLKIIANYGAGFNNVDVKYAREKDIDVTNTPKASTASTAELTFGLVLAVARRIVEGDKLSRTQGFDGWAPLFFRGREVSGKTIGIIGLGEIGSAVAKRAKAFDMDILYTGPHQKKEKEREIGAKYVDLNTLLENADFITINAAYNPDLHHMIDTEQFKLMKSTAYLINAGRGPIVNEEALVKALEDKQIEGAALDVYEFEPEITEGLKSLDNVVITPHIGNATYEARDMMSKIVANDTIKKLNGETPQFIVNK</sequence>
<protein>
    <recommendedName>
        <fullName>Putative 2-hydroxyacid dehydrogenase SH0752</fullName>
        <ecNumber>1.1.1.-</ecNumber>
    </recommendedName>
</protein>
<name>Y752_STAHJ</name>
<keyword id="KW-0520">NAD</keyword>
<keyword id="KW-0560">Oxidoreductase</keyword>
<accession>Q4L8G4</accession>
<comment type="similarity">
    <text evidence="2">Belongs to the D-isomer specific 2-hydroxyacid dehydrogenase family.</text>
</comment>
<organism>
    <name type="scientific">Staphylococcus haemolyticus (strain JCSC1435)</name>
    <dbReference type="NCBI Taxonomy" id="279808"/>
    <lineage>
        <taxon>Bacteria</taxon>
        <taxon>Bacillati</taxon>
        <taxon>Bacillota</taxon>
        <taxon>Bacilli</taxon>
        <taxon>Bacillales</taxon>
        <taxon>Staphylococcaceae</taxon>
        <taxon>Staphylococcus</taxon>
    </lineage>
</organism>
<evidence type="ECO:0000250" key="1"/>
<evidence type="ECO:0000305" key="2"/>
<gene>
    <name type="ordered locus">SH0752</name>
</gene>
<proteinExistence type="inferred from homology"/>